<proteinExistence type="evidence at protein level"/>
<keyword id="KW-0002">3D-structure</keyword>
<keyword id="KW-0963">Cytoplasm</keyword>
<keyword id="KW-1185">Reference proteome</keyword>
<keyword id="KW-0687">Ribonucleoprotein</keyword>
<keyword id="KW-0694">RNA-binding</keyword>
<keyword id="KW-0733">Signal recognition particle</keyword>
<protein>
    <recommendedName>
        <fullName evidence="1">Signal recognition particle 19 kDa protein</fullName>
        <shortName evidence="1">SRP19</shortName>
    </recommendedName>
</protein>
<evidence type="ECO:0000255" key="1">
    <source>
        <dbReference type="HAMAP-Rule" id="MF_00305"/>
    </source>
</evidence>
<evidence type="ECO:0007829" key="2">
    <source>
        <dbReference type="PDB" id="3DLU"/>
    </source>
</evidence>
<accession>Q8TZT9</accession>
<comment type="function">
    <text evidence="1">Involved in targeting and insertion of nascent membrane proteins into the cytoplasmic membrane. Binds directly to 7S RNA and mediates binding of the 54 kDa subunit of the SRP.</text>
</comment>
<comment type="subunit">
    <text evidence="1">Part of the signal recognition particle protein translocation system, which is composed of SRP and FtsY. Archaeal SRP consists of a 7S RNA molecule of 300 nucleotides and two protein subunits: SRP54 and SRP19.</text>
</comment>
<comment type="subcellular location">
    <subcellularLocation>
        <location evidence="1">Cytoplasm</location>
    </subcellularLocation>
</comment>
<comment type="similarity">
    <text evidence="1">Belongs to the SRP19 family.</text>
</comment>
<reference key="1">
    <citation type="journal article" date="1999" name="Genetics">
        <title>Divergence of the hyperthermophilic archaea Pyrococcus furiosus and P. horikoshii inferred from complete genomic sequences.</title>
        <authorList>
            <person name="Maeder D.L."/>
            <person name="Weiss R.B."/>
            <person name="Dunn D.M."/>
            <person name="Cherry J.L."/>
            <person name="Gonzalez J.M."/>
            <person name="DiRuggiero J."/>
            <person name="Robb F.T."/>
        </authorList>
    </citation>
    <scope>NUCLEOTIDE SEQUENCE [LARGE SCALE GENOMIC DNA]</scope>
    <source>
        <strain>ATCC 43587 / DSM 3638 / JCM 8422 / Vc1</strain>
    </source>
</reference>
<gene>
    <name evidence="1" type="primary">srp19</name>
    <name type="ordered locus">PF1894</name>
</gene>
<dbReference type="EMBL" id="AE009950">
    <property type="protein sequence ID" value="AAL82018.1"/>
    <property type="molecule type" value="Genomic_DNA"/>
</dbReference>
<dbReference type="RefSeq" id="WP_011013033.1">
    <property type="nucleotide sequence ID" value="NZ_CP023154.1"/>
</dbReference>
<dbReference type="PDB" id="3DLU">
    <property type="method" value="X-ray"/>
    <property type="resolution" value="1.80 A"/>
    <property type="chains" value="A/B/C/D=1-100"/>
</dbReference>
<dbReference type="PDB" id="3DLV">
    <property type="method" value="X-ray"/>
    <property type="resolution" value="1.87 A"/>
    <property type="chains" value="A/B=1-100"/>
</dbReference>
<dbReference type="PDBsum" id="3DLU"/>
<dbReference type="PDBsum" id="3DLV"/>
<dbReference type="SMR" id="Q8TZT9"/>
<dbReference type="STRING" id="186497.PF1894"/>
<dbReference type="TCDB" id="3.A.5.7.2">
    <property type="family name" value="the general secretory pathway (sec) family"/>
</dbReference>
<dbReference type="PaxDb" id="186497-PF1894"/>
<dbReference type="KEGG" id="pfu:PF1894"/>
<dbReference type="PATRIC" id="fig|186497.12.peg.1965"/>
<dbReference type="eggNOG" id="arCOG01217">
    <property type="taxonomic scope" value="Archaea"/>
</dbReference>
<dbReference type="HOGENOM" id="CLU_169299_1_0_2"/>
<dbReference type="OrthoDB" id="56356at2157"/>
<dbReference type="PhylomeDB" id="Q8TZT9"/>
<dbReference type="EvolutionaryTrace" id="Q8TZT9"/>
<dbReference type="Proteomes" id="UP000001013">
    <property type="component" value="Chromosome"/>
</dbReference>
<dbReference type="GO" id="GO:0048500">
    <property type="term" value="C:signal recognition particle"/>
    <property type="evidence" value="ECO:0007669"/>
    <property type="project" value="UniProtKB-UniRule"/>
</dbReference>
<dbReference type="GO" id="GO:0008312">
    <property type="term" value="F:7S RNA binding"/>
    <property type="evidence" value="ECO:0007669"/>
    <property type="project" value="UniProtKB-UniRule"/>
</dbReference>
<dbReference type="GO" id="GO:0006614">
    <property type="term" value="P:SRP-dependent cotranslational protein targeting to membrane"/>
    <property type="evidence" value="ECO:0007669"/>
    <property type="project" value="InterPro"/>
</dbReference>
<dbReference type="Gene3D" id="3.30.56.30">
    <property type="entry name" value="Signal recognition particle, SRP19-like subunit"/>
    <property type="match status" value="1"/>
</dbReference>
<dbReference type="HAMAP" id="MF_00305">
    <property type="entry name" value="SRP19"/>
    <property type="match status" value="1"/>
</dbReference>
<dbReference type="InterPro" id="IPR002778">
    <property type="entry name" value="Signal_recog_particle_SRP19"/>
</dbReference>
<dbReference type="InterPro" id="IPR036521">
    <property type="entry name" value="SRP19-like_sf"/>
</dbReference>
<dbReference type="InterPro" id="IPR022938">
    <property type="entry name" value="SRP19_arc-type"/>
</dbReference>
<dbReference type="NCBIfam" id="NF002993">
    <property type="entry name" value="PRK03745.1"/>
    <property type="match status" value="1"/>
</dbReference>
<dbReference type="Pfam" id="PF01922">
    <property type="entry name" value="SRP19"/>
    <property type="match status" value="1"/>
</dbReference>
<dbReference type="SUPFAM" id="SSF69695">
    <property type="entry name" value="SRP19"/>
    <property type="match status" value="1"/>
</dbReference>
<name>SRP19_PYRFU</name>
<sequence>MGRFVVWPSELDSRLSRKYGRIVPRSIAVESPRVEEIVRAAEELKFKVIRVEEDKLNPRLSGIDEELRTFGMIVLESPYGKSKSLKLIAQKIREFRRRSA</sequence>
<feature type="chain" id="PRO_0000135223" description="Signal recognition particle 19 kDa protein">
    <location>
        <begin position="1"/>
        <end position="100"/>
    </location>
</feature>
<feature type="strand" evidence="2">
    <location>
        <begin position="3"/>
        <end position="6"/>
    </location>
</feature>
<feature type="helix" evidence="2">
    <location>
        <begin position="8"/>
        <end position="11"/>
    </location>
</feature>
<feature type="helix" evidence="2">
    <location>
        <begin position="17"/>
        <end position="19"/>
    </location>
</feature>
<feature type="turn" evidence="2">
    <location>
        <begin position="25"/>
        <end position="27"/>
    </location>
</feature>
<feature type="strand" evidence="2">
    <location>
        <begin position="28"/>
        <end position="31"/>
    </location>
</feature>
<feature type="helix" evidence="2">
    <location>
        <begin position="34"/>
        <end position="43"/>
    </location>
</feature>
<feature type="strand" evidence="2">
    <location>
        <begin position="47"/>
        <end position="56"/>
    </location>
</feature>
<feature type="strand" evidence="2">
    <location>
        <begin position="68"/>
        <end position="76"/>
    </location>
</feature>
<feature type="helix" evidence="2">
    <location>
        <begin position="81"/>
        <end position="100"/>
    </location>
</feature>
<organism>
    <name type="scientific">Pyrococcus furiosus (strain ATCC 43587 / DSM 3638 / JCM 8422 / Vc1)</name>
    <dbReference type="NCBI Taxonomy" id="186497"/>
    <lineage>
        <taxon>Archaea</taxon>
        <taxon>Methanobacteriati</taxon>
        <taxon>Methanobacteriota</taxon>
        <taxon>Thermococci</taxon>
        <taxon>Thermococcales</taxon>
        <taxon>Thermococcaceae</taxon>
        <taxon>Pyrococcus</taxon>
    </lineage>
</organism>